<evidence type="ECO:0000250" key="1"/>
<evidence type="ECO:0000269" key="2">
    <source>
    </source>
</evidence>
<evidence type="ECO:0000269" key="3">
    <source>
    </source>
</evidence>
<evidence type="ECO:0000269" key="4">
    <source>
    </source>
</evidence>
<evidence type="ECO:0000305" key="5"/>
<evidence type="ECO:0000305" key="6">
    <source>
    </source>
</evidence>
<evidence type="ECO:0000305" key="7">
    <source>
    </source>
</evidence>
<reference key="1">
    <citation type="journal article" date="1996" name="DNA Res.">
        <title>A 570-kb DNA sequence of the Escherichia coli K-12 genome corresponding to the 28.0-40.1 min region on the linkage map.</title>
        <authorList>
            <person name="Aiba H."/>
            <person name="Baba T."/>
            <person name="Fujita K."/>
            <person name="Hayashi K."/>
            <person name="Inada T."/>
            <person name="Isono K."/>
            <person name="Itoh T."/>
            <person name="Kasai H."/>
            <person name="Kashimoto K."/>
            <person name="Kimura S."/>
            <person name="Kitakawa M."/>
            <person name="Kitagawa M."/>
            <person name="Makino K."/>
            <person name="Miki T."/>
            <person name="Mizobuchi K."/>
            <person name="Mori H."/>
            <person name="Mori T."/>
            <person name="Motomura K."/>
            <person name="Nakade S."/>
            <person name="Nakamura Y."/>
            <person name="Nashimoto H."/>
            <person name="Nishio Y."/>
            <person name="Oshima T."/>
            <person name="Saito N."/>
            <person name="Sampei G."/>
            <person name="Seki Y."/>
            <person name="Sivasundaram S."/>
            <person name="Tagami H."/>
            <person name="Takeda J."/>
            <person name="Takemoto K."/>
            <person name="Takeuchi Y."/>
            <person name="Wada C."/>
            <person name="Yamamoto Y."/>
            <person name="Horiuchi T."/>
        </authorList>
    </citation>
    <scope>NUCLEOTIDE SEQUENCE [LARGE SCALE GENOMIC DNA]</scope>
    <source>
        <strain>K12 / W3110 / ATCC 27325 / DSM 5911</strain>
    </source>
</reference>
<reference key="2">
    <citation type="journal article" date="1997" name="Science">
        <title>The complete genome sequence of Escherichia coli K-12.</title>
        <authorList>
            <person name="Blattner F.R."/>
            <person name="Plunkett G. III"/>
            <person name="Bloch C.A."/>
            <person name="Perna N.T."/>
            <person name="Burland V."/>
            <person name="Riley M."/>
            <person name="Collado-Vides J."/>
            <person name="Glasner J.D."/>
            <person name="Rode C.K."/>
            <person name="Mayhew G.F."/>
            <person name="Gregor J."/>
            <person name="Davis N.W."/>
            <person name="Kirkpatrick H.A."/>
            <person name="Goeden M.A."/>
            <person name="Rose D.J."/>
            <person name="Mau B."/>
            <person name="Shao Y."/>
        </authorList>
    </citation>
    <scope>NUCLEOTIDE SEQUENCE [LARGE SCALE GENOMIC DNA]</scope>
    <source>
        <strain>K12 / MG1655 / ATCC 47076</strain>
    </source>
</reference>
<reference key="3">
    <citation type="journal article" date="2006" name="Mol. Syst. Biol.">
        <title>Highly accurate genome sequences of Escherichia coli K-12 strains MG1655 and W3110.</title>
        <authorList>
            <person name="Hayashi K."/>
            <person name="Morooka N."/>
            <person name="Yamamoto Y."/>
            <person name="Fujita K."/>
            <person name="Isono K."/>
            <person name="Choi S."/>
            <person name="Ohtsubo E."/>
            <person name="Baba T."/>
            <person name="Wanner B.L."/>
            <person name="Mori H."/>
            <person name="Horiuchi T."/>
        </authorList>
    </citation>
    <scope>NUCLEOTIDE SEQUENCE [LARGE SCALE GENOMIC DNA]</scope>
    <source>
        <strain>K12 / W3110 / ATCC 27325 / DSM 5911</strain>
    </source>
</reference>
<reference key="4">
    <citation type="journal article" date="1998" name="J. Bacteriol.">
        <title>Arginine catabolism and the arginine succinyltransferase pathway in Escherichia coli.</title>
        <authorList>
            <person name="Schneider B.L."/>
            <person name="Kiupakis A.K."/>
            <person name="Reitzer L.J."/>
        </authorList>
    </citation>
    <scope>FUNCTION</scope>
    <scope>INDUCTION</scope>
    <scope>PATHWAY</scope>
    <scope>CATALYTIC ACTIVITY</scope>
</reference>
<reference key="5">
    <citation type="journal article" date="2002" name="J. Bacteriol.">
        <title>ArgR-independent induction and ArgR-dependent superinduction of the astCADBE operon in Escherichia coli.</title>
        <authorList>
            <person name="Kiupakis A.K."/>
            <person name="Reitzer L."/>
        </authorList>
    </citation>
    <scope>INDUCTION</scope>
</reference>
<reference key="6">
    <citation type="journal article" date="2005" name="FEMS Microbiol. Rev.">
        <title>Enzyme genomics: application of general enzymatic screens to discover new enzymes.</title>
        <authorList>
            <person name="Kuznetsova E."/>
            <person name="Proudfoot M."/>
            <person name="Sanders S.A."/>
            <person name="Reinking J."/>
            <person name="Savchenko A."/>
            <person name="Arrowsmith C.H."/>
            <person name="Edwards A.M."/>
            <person name="Yakunin A.F."/>
        </authorList>
    </citation>
    <scope>FUNCTION</scope>
    <scope>CATALYTIC ACTIVITY</scope>
    <scope>KINETIC PARAMETERS</scope>
</reference>
<sequence>MTLWINGDWITGQGASRVKRNPVSGEVLWQGNDADAAQVEQACRAARAAFPRWARLSFAERHAVVERFAALLESNKAELTAIIARETGKPRWEAATEVTAMINKIAISIKAYHVRTGEQRSEMPDGAASLRHRPHGVLAVFGPYNFPGHLPNGHIVPALLAGNTIIFKPSELTPWSGEAVMRLWQQAGLPPGVLNLVQGGRETGQALSALEDLDGLLFTGSANTGYQLHRQLSGQPEKILALEMGGNNPLIIDEVADIDAAVHLTIQSAFVTAGQRCTCARRLLLKSGAQGDAFLARLVAVSQRLTPGNWDDEPQPFIGGLISEQAAQQVVTAWQQLEAMGGRPLLAPRLLQAGTSLLTPGIIEMTGVAGVPDEEVFGPLLRVWRYDTFDEAIRMANNTRFGLSCGLVSPEREKFDQLLLEARAGIVNWNKPLTGAASTAPFGGIGASGNHRPSAWYAADYCAWPMASLESDSLTLPATLNPGLDFSDEVVR</sequence>
<feature type="chain" id="PRO_0000056569" description="N-succinylglutamate 5-semialdehyde dehydrogenase">
    <location>
        <begin position="1"/>
        <end position="492"/>
    </location>
</feature>
<feature type="active site" evidence="1">
    <location>
        <position position="243"/>
    </location>
</feature>
<feature type="active site" evidence="1">
    <location>
        <position position="277"/>
    </location>
</feature>
<feature type="binding site" evidence="1">
    <location>
        <begin position="220"/>
        <end position="225"/>
    </location>
    <ligand>
        <name>NAD(+)</name>
        <dbReference type="ChEBI" id="CHEBI:57540"/>
    </ligand>
</feature>
<accession>P76217</accession>
<accession>P78169</accession>
<accession>P78170</accession>
<organism>
    <name type="scientific">Escherichia coli (strain K12)</name>
    <dbReference type="NCBI Taxonomy" id="83333"/>
    <lineage>
        <taxon>Bacteria</taxon>
        <taxon>Pseudomonadati</taxon>
        <taxon>Pseudomonadota</taxon>
        <taxon>Gammaproteobacteria</taxon>
        <taxon>Enterobacterales</taxon>
        <taxon>Enterobacteriaceae</taxon>
        <taxon>Escherichia</taxon>
    </lineage>
</organism>
<name>ASTD_ECOLI</name>
<proteinExistence type="evidence at protein level"/>
<comment type="function">
    <text evidence="3 7">Catalyzes the NAD-dependent reduction of succinylglutamate semialdehyde into succinylglutamate (Probable). Also shows in vitro activity with decanal or succinic semialdehyde as the electron donor and NAD as the electron acceptor. No activity is detected with NADP as the electron acceptor. Therefore, is an aldehyde dehydrogenase with broad substrate specificity (PubMed:15808744).</text>
</comment>
<comment type="catalytic activity">
    <reaction evidence="6 7">
        <text>N-succinyl-L-glutamate 5-semialdehyde + NAD(+) + H2O = N-succinyl-L-glutamate + NADH + 2 H(+)</text>
        <dbReference type="Rhea" id="RHEA:10812"/>
        <dbReference type="ChEBI" id="CHEBI:15377"/>
        <dbReference type="ChEBI" id="CHEBI:15378"/>
        <dbReference type="ChEBI" id="CHEBI:57540"/>
        <dbReference type="ChEBI" id="CHEBI:57945"/>
        <dbReference type="ChEBI" id="CHEBI:58520"/>
        <dbReference type="ChEBI" id="CHEBI:58763"/>
        <dbReference type="EC" id="1.2.1.71"/>
    </reaction>
    <physiologicalReaction direction="left-to-right" evidence="7">
        <dbReference type="Rhea" id="RHEA:10813"/>
    </physiologicalReaction>
</comment>
<comment type="catalytic activity">
    <reaction evidence="3">
        <text>decanal + NAD(+) + H2O = decanoate + NADH + 2 H(+)</text>
        <dbReference type="Rhea" id="RHEA:44104"/>
        <dbReference type="ChEBI" id="CHEBI:15377"/>
        <dbReference type="ChEBI" id="CHEBI:15378"/>
        <dbReference type="ChEBI" id="CHEBI:27689"/>
        <dbReference type="ChEBI" id="CHEBI:31457"/>
        <dbReference type="ChEBI" id="CHEBI:57540"/>
        <dbReference type="ChEBI" id="CHEBI:57945"/>
    </reaction>
</comment>
<comment type="catalytic activity">
    <reaction evidence="3">
        <text>succinate semialdehyde + NAD(+) + H2O = succinate + NADH + 2 H(+)</text>
        <dbReference type="Rhea" id="RHEA:13217"/>
        <dbReference type="ChEBI" id="CHEBI:15377"/>
        <dbReference type="ChEBI" id="CHEBI:15378"/>
        <dbReference type="ChEBI" id="CHEBI:30031"/>
        <dbReference type="ChEBI" id="CHEBI:57540"/>
        <dbReference type="ChEBI" id="CHEBI:57706"/>
        <dbReference type="ChEBI" id="CHEBI:57945"/>
    </reaction>
</comment>
<comment type="biophysicochemical properties">
    <kinetics>
        <KM evidence="3">91 uM for decanal</KM>
        <KM evidence="3">160 uM for NAD (at pH 8.5)</KM>
        <KM evidence="3">1.72 mM for succinic semialdehyde (at pH 8.5)</KM>
        <Vmax evidence="3">5.0 umol/min/mg enzyme with decanal as substrate</Vmax>
        <Vmax evidence="3">0.69 umol/min/mg enzyme with succinic semialdehyde as substrate</Vmax>
    </kinetics>
</comment>
<comment type="pathway">
    <text evidence="4">Amino-acid degradation; L-arginine degradation via AST pathway; L-glutamate and succinate from L-arginine: step 4/5.</text>
</comment>
<comment type="interaction">
    <interactant intactId="EBI-545161">
        <id>P76217</id>
    </interactant>
    <interactant intactId="EBI-545170">
        <id>P06722</id>
        <label>mutH</label>
    </interactant>
    <organismsDiffer>false</organismsDiffer>
    <experiments>2</experiments>
</comment>
<comment type="induction">
    <text evidence="2 4">By nitrogen starvation, and arginine. Induced at stationary phase by sigma S.</text>
</comment>
<comment type="similarity">
    <text evidence="5">Belongs to the aldehyde dehydrogenase family. AstD subfamily.</text>
</comment>
<protein>
    <recommendedName>
        <fullName>N-succinylglutamate 5-semialdehyde dehydrogenase</fullName>
        <ecNumber evidence="6 7">1.2.1.71</ecNumber>
    </recommendedName>
    <alternativeName>
        <fullName>Succinylglutamic semialdehyde dehydrogenase</fullName>
        <shortName>SGSD</shortName>
    </alternativeName>
</protein>
<gene>
    <name type="primary">astD</name>
    <name type="synonym">ydjU</name>
    <name type="ordered locus">b1746</name>
    <name type="ordered locus">JW5282</name>
</gene>
<keyword id="KW-0056">Arginine metabolism</keyword>
<keyword id="KW-0520">NAD</keyword>
<keyword id="KW-0560">Oxidoreductase</keyword>
<keyword id="KW-1185">Reference proteome</keyword>
<keyword id="KW-0346">Stress response</keyword>
<dbReference type="EC" id="1.2.1.71" evidence="6 7"/>
<dbReference type="EMBL" id="U00096">
    <property type="protein sequence ID" value="AAC74816.1"/>
    <property type="molecule type" value="Genomic_DNA"/>
</dbReference>
<dbReference type="EMBL" id="AP009048">
    <property type="protein sequence ID" value="BAA15538.2"/>
    <property type="molecule type" value="Genomic_DNA"/>
</dbReference>
<dbReference type="PIR" id="B64934">
    <property type="entry name" value="B64934"/>
</dbReference>
<dbReference type="RefSeq" id="NP_416260.1">
    <property type="nucleotide sequence ID" value="NC_000913.3"/>
</dbReference>
<dbReference type="RefSeq" id="WP_000177206.1">
    <property type="nucleotide sequence ID" value="NZ_SSZK01000001.1"/>
</dbReference>
<dbReference type="SMR" id="P76217"/>
<dbReference type="BioGRID" id="4262236">
    <property type="interactions" value="19"/>
</dbReference>
<dbReference type="DIP" id="DIP-9186N"/>
<dbReference type="FunCoup" id="P76217">
    <property type="interactions" value="28"/>
</dbReference>
<dbReference type="IntAct" id="P76217">
    <property type="interactions" value="1"/>
</dbReference>
<dbReference type="STRING" id="511145.b1746"/>
<dbReference type="jPOST" id="P76217"/>
<dbReference type="PaxDb" id="511145-b1746"/>
<dbReference type="EnsemblBacteria" id="AAC74816">
    <property type="protein sequence ID" value="AAC74816"/>
    <property type="gene ID" value="b1746"/>
</dbReference>
<dbReference type="GeneID" id="946260"/>
<dbReference type="KEGG" id="ecj:JW5282"/>
<dbReference type="KEGG" id="eco:b1746"/>
<dbReference type="KEGG" id="ecoc:C3026_09975"/>
<dbReference type="PATRIC" id="fig|1411691.4.peg.510"/>
<dbReference type="EchoBASE" id="EB3753"/>
<dbReference type="eggNOG" id="COG1012">
    <property type="taxonomic scope" value="Bacteria"/>
</dbReference>
<dbReference type="HOGENOM" id="CLU_005391_1_0_6"/>
<dbReference type="InParanoid" id="P76217"/>
<dbReference type="OMA" id="LIPAAWD"/>
<dbReference type="OrthoDB" id="9812625at2"/>
<dbReference type="PhylomeDB" id="P76217"/>
<dbReference type="BioCyc" id="EcoCyc:SUCCGLUALDDEHYD-MONOMER"/>
<dbReference type="BioCyc" id="MetaCyc:SUCCGLUALDDEHYD-MONOMER"/>
<dbReference type="BRENDA" id="1.2.1.3">
    <property type="organism ID" value="2026"/>
</dbReference>
<dbReference type="UniPathway" id="UPA00185">
    <property type="reaction ID" value="UER00282"/>
</dbReference>
<dbReference type="PRO" id="PR:P76217"/>
<dbReference type="Proteomes" id="UP000000625">
    <property type="component" value="Chromosome"/>
</dbReference>
<dbReference type="GO" id="GO:0004029">
    <property type="term" value="F:aldehyde dehydrogenase (NAD+) activity"/>
    <property type="evidence" value="ECO:0000314"/>
    <property type="project" value="EcoCyc"/>
</dbReference>
<dbReference type="GO" id="GO:0004777">
    <property type="term" value="F:succinate-semialdehyde dehydrogenase (NAD+) activity"/>
    <property type="evidence" value="ECO:0007669"/>
    <property type="project" value="RHEA"/>
</dbReference>
<dbReference type="GO" id="GO:0043824">
    <property type="term" value="F:succinylglutamate-semialdehyde dehydrogenase activity"/>
    <property type="evidence" value="ECO:0007669"/>
    <property type="project" value="UniProtKB-EC"/>
</dbReference>
<dbReference type="GO" id="GO:0019544">
    <property type="term" value="P:arginine catabolic process to glutamate"/>
    <property type="evidence" value="ECO:0007669"/>
    <property type="project" value="UniProtKB-UniRule"/>
</dbReference>
<dbReference type="GO" id="GO:0019545">
    <property type="term" value="P:arginine catabolic process to succinate"/>
    <property type="evidence" value="ECO:0007669"/>
    <property type="project" value="UniProtKB-UniRule"/>
</dbReference>
<dbReference type="CDD" id="cd07095">
    <property type="entry name" value="ALDH_SGSD_AstD"/>
    <property type="match status" value="1"/>
</dbReference>
<dbReference type="FunFam" id="3.40.309.10:FF:000013">
    <property type="entry name" value="N-succinylglutamate 5-semialdehyde dehydrogenase"/>
    <property type="match status" value="1"/>
</dbReference>
<dbReference type="FunFam" id="3.40.605.10:FF:000010">
    <property type="entry name" value="N-succinylglutamate 5-semialdehyde dehydrogenase"/>
    <property type="match status" value="1"/>
</dbReference>
<dbReference type="Gene3D" id="3.40.605.10">
    <property type="entry name" value="Aldehyde Dehydrogenase, Chain A, domain 1"/>
    <property type="match status" value="1"/>
</dbReference>
<dbReference type="Gene3D" id="3.40.309.10">
    <property type="entry name" value="Aldehyde Dehydrogenase, Chain A, domain 2"/>
    <property type="match status" value="1"/>
</dbReference>
<dbReference type="HAMAP" id="MF_01174">
    <property type="entry name" value="Aldedh_AstD"/>
    <property type="match status" value="1"/>
</dbReference>
<dbReference type="InterPro" id="IPR016161">
    <property type="entry name" value="Ald_DH/histidinol_DH"/>
</dbReference>
<dbReference type="InterPro" id="IPR016163">
    <property type="entry name" value="Ald_DH_C"/>
</dbReference>
<dbReference type="InterPro" id="IPR016160">
    <property type="entry name" value="Ald_DH_CS_CYS"/>
</dbReference>
<dbReference type="InterPro" id="IPR029510">
    <property type="entry name" value="Ald_DH_CS_GLU"/>
</dbReference>
<dbReference type="InterPro" id="IPR016162">
    <property type="entry name" value="Ald_DH_N"/>
</dbReference>
<dbReference type="InterPro" id="IPR015590">
    <property type="entry name" value="Aldehyde_DH_dom"/>
</dbReference>
<dbReference type="InterPro" id="IPR017649">
    <property type="entry name" value="SuccinylGlu_semiald_DH_AstD"/>
</dbReference>
<dbReference type="NCBIfam" id="TIGR03240">
    <property type="entry name" value="arg_catab_astD"/>
    <property type="match status" value="1"/>
</dbReference>
<dbReference type="NCBIfam" id="NF006992">
    <property type="entry name" value="PRK09457.1"/>
    <property type="match status" value="1"/>
</dbReference>
<dbReference type="PANTHER" id="PTHR11699">
    <property type="entry name" value="ALDEHYDE DEHYDROGENASE-RELATED"/>
    <property type="match status" value="1"/>
</dbReference>
<dbReference type="Pfam" id="PF00171">
    <property type="entry name" value="Aldedh"/>
    <property type="match status" value="1"/>
</dbReference>
<dbReference type="SUPFAM" id="SSF53720">
    <property type="entry name" value="ALDH-like"/>
    <property type="match status" value="1"/>
</dbReference>
<dbReference type="PROSITE" id="PS00070">
    <property type="entry name" value="ALDEHYDE_DEHYDR_CYS"/>
    <property type="match status" value="1"/>
</dbReference>
<dbReference type="PROSITE" id="PS00687">
    <property type="entry name" value="ALDEHYDE_DEHYDR_GLU"/>
    <property type="match status" value="1"/>
</dbReference>